<evidence type="ECO:0000250" key="1"/>
<evidence type="ECO:0000250" key="2">
    <source>
        <dbReference type="UniProtKB" id="P63101"/>
    </source>
</evidence>
<evidence type="ECO:0000250" key="3">
    <source>
        <dbReference type="UniProtKB" id="P63103"/>
    </source>
</evidence>
<evidence type="ECO:0000250" key="4">
    <source>
        <dbReference type="UniProtKB" id="P63104"/>
    </source>
</evidence>
<evidence type="ECO:0000250" key="5">
    <source>
        <dbReference type="UniProtKB" id="Q9ES28"/>
    </source>
</evidence>
<evidence type="ECO:0000269" key="6">
    <source>
    </source>
</evidence>
<evidence type="ECO:0000269" key="7">
    <source>
    </source>
</evidence>
<evidence type="ECO:0000269" key="8">
    <source>
    </source>
</evidence>
<evidence type="ECO:0000269" key="9">
    <source>
    </source>
</evidence>
<evidence type="ECO:0000269" key="10">
    <source ref="5"/>
</evidence>
<evidence type="ECO:0000305" key="11"/>
<evidence type="ECO:0007744" key="12">
    <source>
    </source>
</evidence>
<gene>
    <name type="primary">Ywhaz</name>
    <name type="synonym">Msfs1</name>
</gene>
<feature type="chain" id="PRO_0000058630" description="14-3-3 protein zeta/delta">
    <location>
        <begin position="1"/>
        <end position="245"/>
    </location>
</feature>
<feature type="site" description="Interaction with phosphoserine on interacting protein" evidence="3">
    <location>
        <position position="56"/>
    </location>
</feature>
<feature type="site" description="Interaction with phosphoserine on interacting protein" evidence="3">
    <location>
        <position position="127"/>
    </location>
</feature>
<feature type="modified residue" description="N-acetylmethionine" evidence="10">
    <location>
        <position position="1"/>
    </location>
</feature>
<feature type="modified residue" description="N6-acetyllysine" evidence="4">
    <location>
        <position position="3"/>
    </location>
</feature>
<feature type="modified residue" description="Phosphoserine; by PKA" evidence="4">
    <location>
        <position position="58"/>
    </location>
</feature>
<feature type="modified residue" description="N6-acetyllysine" evidence="4">
    <location>
        <position position="68"/>
    </location>
</feature>
<feature type="modified residue" description="Phosphoserine" evidence="4">
    <location>
        <position position="184"/>
    </location>
</feature>
<feature type="modified residue" description="Phosphoserine" evidence="12">
    <location>
        <position position="207"/>
    </location>
</feature>
<feature type="modified residue" description="Phosphoserine" evidence="12">
    <location>
        <position position="210"/>
    </location>
</feature>
<feature type="modified residue" description="Phosphothreonine; by CK1" evidence="4">
    <location>
        <position position="232"/>
    </location>
</feature>
<feature type="sequence conflict" description="In Ref. 2; AAA80544." evidence="11" ref="2">
    <original>T</original>
    <variation>M</variation>
    <location>
        <position position="88"/>
    </location>
</feature>
<feature type="sequence conflict" description="In Ref. 8; AAC37660." evidence="11" ref="8">
    <original>A</original>
    <variation>R</variation>
    <location>
        <position position="109"/>
    </location>
</feature>
<keyword id="KW-0007">Acetylation</keyword>
<keyword id="KW-0963">Cytoplasm</keyword>
<keyword id="KW-0903">Direct protein sequencing</keyword>
<keyword id="KW-0597">Phosphoprotein</keyword>
<keyword id="KW-1185">Reference proteome</keyword>
<protein>
    <recommendedName>
        <fullName>14-3-3 protein zeta/delta</fullName>
    </recommendedName>
    <alternativeName>
        <fullName>Mitochondrial import stimulation factor S1 subunit</fullName>
    </alternativeName>
    <alternativeName>
        <fullName>Protein kinase C inhibitor protein 1</fullName>
        <shortName>KCIP-1</shortName>
    </alternativeName>
</protein>
<name>1433Z_RAT</name>
<reference key="1">
    <citation type="journal article" date="1994" name="Brain Res. Mol. Brain Res.">
        <title>Molecular cloning of rat cDNAs for the zeta and theta subtypes of 14-3-3 protein and differential distributions of their mRNAs in the brain.</title>
        <authorList>
            <person name="Watanabe M."/>
            <person name="Isobe T."/>
            <person name="Ichimura T."/>
            <person name="Kuwano R."/>
            <person name="Takahashi Y."/>
            <person name="Kondo H."/>
            <person name="Inoue Y."/>
        </authorList>
    </citation>
    <scope>NUCLEOTIDE SEQUENCE [MRNA]</scope>
    <source>
        <strain>Wistar</strain>
        <tissue>Brain</tissue>
    </source>
</reference>
<reference key="2">
    <citation type="journal article" date="1996" name="Gene">
        <title>A gene variation of 14-3-3 zeta isoform in rat hippocampus.</title>
        <authorList>
            <person name="Murakami K."/>
            <person name="Situ S.Y."/>
            <person name="Eshete F."/>
        </authorList>
    </citation>
    <scope>NUCLEOTIDE SEQUENCE [MRNA]</scope>
    <source>
        <strain>Sprague-Dawley</strain>
        <tissue>Hippocampus</tissue>
    </source>
</reference>
<reference key="3">
    <citation type="journal article" date="1994" name="J. Biochem.">
        <title>cDNA cloning and characterization of mitochondrial import stimulation factor (MSF) purified from rat liver cytosol.</title>
        <authorList>
            <person name="Alam R."/>
            <person name="Hachiya N."/>
            <person name="Sakaguchi M."/>
            <person name="Shun-Ichiro K."/>
            <person name="Iwanaga S."/>
            <person name="Kitajima M."/>
            <person name="Mihara K."/>
            <person name="Omura T."/>
        </authorList>
    </citation>
    <scope>NUCLEOTIDE SEQUENCE [MRNA]</scope>
    <source>
        <tissue>Liver</tissue>
    </source>
</reference>
<reference key="4">
    <citation type="journal article" date="2004" name="Genome Res.">
        <title>The status, quality, and expansion of the NIH full-length cDNA project: the Mammalian Gene Collection (MGC).</title>
        <authorList>
            <consortium name="The MGC Project Team"/>
        </authorList>
    </citation>
    <scope>NUCLEOTIDE SEQUENCE [LARGE SCALE MRNA]</scope>
    <source>
        <tissue>Brain</tissue>
        <tissue>Lung</tissue>
    </source>
</reference>
<reference key="5">
    <citation type="submission" date="2009-06" db="UniProtKB">
        <authorList>
            <person name="Bienvenut W.V."/>
            <person name="von Kriegsheim A."/>
            <person name="Kolch W."/>
        </authorList>
    </citation>
    <scope>PROTEIN SEQUENCE OF 1-9; 12-49; 61-68; 92-115; 128-157 AND 213-222</scope>
    <scope>ACETYLATION AT MET-1</scope>
    <scope>IDENTIFICATION BY MASS SPECTROMETRY</scope>
    <source>
        <tissue>Fibroblast</tissue>
        <tissue>Pheochromocytoma</tissue>
    </source>
</reference>
<reference key="6">
    <citation type="submission" date="2009-01" db="UniProtKB">
        <authorList>
            <person name="Lubec G."/>
            <person name="Afjehi-Sadat L."/>
            <person name="Chen W.-Q."/>
            <person name="Kang S.U."/>
            <person name="Lubec S."/>
        </authorList>
    </citation>
    <scope>PROTEIN SEQUENCE OF 12-55; 57-68; 84-115; 121-167; 159-187 AND 194-245</scope>
    <scope>IDENTIFICATION BY MASS SPECTROMETRY</scope>
    <source>
        <strain>Sprague-Dawley</strain>
        <tissue>Brain</tissue>
        <tissue>Hippocampus</tissue>
        <tissue>Spinal cord</tissue>
    </source>
</reference>
<reference key="7">
    <citation type="journal article" date="2001" name="Proc. Natl. Acad. Sci. U.S.A.">
        <title>Role of a pineal cAMP-operated arylalkylamine N-acetyltransferase/14-3-3-binding switch in melatonin synthesis.</title>
        <authorList>
            <person name="Ganguly S."/>
            <person name="Gastel J.A."/>
            <person name="Weller J.L."/>
            <person name="Schwartz C."/>
            <person name="Jaffe H."/>
            <person name="Namboodiri M.A."/>
            <person name="Coon S.L."/>
            <person name="Hickman A.B."/>
            <person name="Rollag M."/>
            <person name="Obsil T."/>
            <person name="Beauverger P."/>
            <person name="Ferry G."/>
            <person name="Boutin J.A."/>
            <person name="Klein D.C."/>
        </authorList>
    </citation>
    <scope>PROTEIN SEQUENCE OF 28-41; 61-68 AND 128-139</scope>
    <scope>INTERACTION WITH AANAT</scope>
    <scope>IDENTIFICATION BY MASS SPECTROMETRY</scope>
</reference>
<reference key="8">
    <citation type="journal article" date="1994" name="DNA Cell Biol.">
        <title>Cloning and characterization of the epsilon and zeta isoforms of the 14-3-3 proteins.</title>
        <authorList>
            <person name="Roseboom P.H."/>
            <person name="Weller J.L."/>
            <person name="Babila T."/>
            <person name="Aitken A."/>
            <person name="Sellers L.A."/>
            <person name="Moffet J.R."/>
            <person name="Namboodiri M.A."/>
            <person name="Klein D.C."/>
        </authorList>
    </citation>
    <scope>NUCLEOTIDE SEQUENCE [MRNA] OF 58-245</scope>
    <source>
        <strain>Sprague-Dawley</strain>
        <tissue>Pineal gland</tissue>
    </source>
</reference>
<reference key="9">
    <citation type="journal article" date="2003" name="Biochem. Biophys. Res. Commun.">
        <title>Characterization of zetin 1/rBSPRY, a novel binding partner of 14-3-3 proteins.</title>
        <authorList>
            <person name="Birkenfeld J."/>
            <person name="Kartmann B."/>
            <person name="Anliker B."/>
            <person name="Ono K."/>
            <person name="Schloetcke B."/>
            <person name="Betz H."/>
            <person name="Roth D."/>
        </authorList>
    </citation>
    <scope>TISSUE SPECIFICITY</scope>
    <scope>INTERACTION WITH BSPRY</scope>
</reference>
<reference key="10">
    <citation type="journal article" date="2006" name="Mol. Cell. Proteomics">
        <title>Transgenic mouse proteomics identifies new 14-3-3-associated proteins involved in cytoskeletal rearrangements and cell signaling.</title>
        <authorList>
            <person name="Angrand P.O."/>
            <person name="Segura I."/>
            <person name="Voelkel P."/>
            <person name="Ghidelli S."/>
            <person name="Terry R."/>
            <person name="Brajenovic M."/>
            <person name="Vintersten K."/>
            <person name="Klein R."/>
            <person name="Superti-Furga G."/>
            <person name="Drewes G."/>
            <person name="Kuster B."/>
            <person name="Bouwmeester T."/>
            <person name="Acker-Palmer A."/>
        </authorList>
    </citation>
    <scope>FUNCTION</scope>
</reference>
<reference key="11">
    <citation type="journal article" date="2011" name="J. Biol. Chem.">
        <title>Identification of a novel Bcl-2-interacting mediator of cell death (Bim) E3 ligase, tripartite motif-containing protein 2 (TRIM2), and its role in rapid ischemic tolerance-induced neuroprotection.</title>
        <authorList>
            <person name="Thompson S."/>
            <person name="Pearson A.N."/>
            <person name="Ashley M.D."/>
            <person name="Jessick V."/>
            <person name="Murphy B.M."/>
            <person name="Gafken P."/>
            <person name="Henshall D.C."/>
            <person name="Morris K.T."/>
            <person name="Simon R.P."/>
            <person name="Meller R."/>
        </authorList>
    </citation>
    <scope>INTERACTION WITH BCL2L11</scope>
</reference>
<reference key="12">
    <citation type="journal article" date="2012" name="Nat. Commun.">
        <title>Quantitative maps of protein phosphorylation sites across 14 different rat organs and tissues.</title>
        <authorList>
            <person name="Lundby A."/>
            <person name="Secher A."/>
            <person name="Lage K."/>
            <person name="Nordsborg N.B."/>
            <person name="Dmytriyev A."/>
            <person name="Lundby C."/>
            <person name="Olsen J.V."/>
        </authorList>
    </citation>
    <scope>PHOSPHORYLATION [LARGE SCALE ANALYSIS] AT SER-207 AND SER-210</scope>
    <scope>IDENTIFICATION BY MASS SPECTROMETRY [LARGE SCALE ANALYSIS]</scope>
</reference>
<organism>
    <name type="scientific">Rattus norvegicus</name>
    <name type="common">Rat</name>
    <dbReference type="NCBI Taxonomy" id="10116"/>
    <lineage>
        <taxon>Eukaryota</taxon>
        <taxon>Metazoa</taxon>
        <taxon>Chordata</taxon>
        <taxon>Craniata</taxon>
        <taxon>Vertebrata</taxon>
        <taxon>Euteleostomi</taxon>
        <taxon>Mammalia</taxon>
        <taxon>Eutheria</taxon>
        <taxon>Euarchontoglires</taxon>
        <taxon>Glires</taxon>
        <taxon>Rodentia</taxon>
        <taxon>Myomorpha</taxon>
        <taxon>Muroidea</taxon>
        <taxon>Muridae</taxon>
        <taxon>Murinae</taxon>
        <taxon>Rattus</taxon>
    </lineage>
</organism>
<sequence length="245" mass="27771">MDKNELVQKAKLAEQAERYDDMAACMKSVTEQGAELSNEERNLLSVAYKNVVGARRSSWRVVSSIEQKTEGAEKKQQMAREYREKIETELRDICNDVLSLLEKFLIPNASQPESKVFYLKMKGDYYRYLAEVAAGDDKKGIVDQSQQAYQEAFEISKKEMQPTHPIRLGLALNFSVFYYEILNSPEKACSLAKTAFDEAIAELDTLSEESYKDSTLIMQLLRDNLTLWTSDTQGDEAEAGEGGEN</sequence>
<comment type="function">
    <text evidence="4 8">Adapter protein implicated in the regulation of a large spectrum of both general and specialized signaling pathways (By similarity). Binds to a large number of partners, usually by recognition of a phosphoserine or phosphothreonine motif (By similarity). Binding generally results in the modulation of the activity of the binding partner (By similarity). Promotes cytosolic retention and inactivation of TFEB transcription factor by binding to phosphorylated TFEB (By similarity). Induces ARHGEF7 activity on RAC1 as well as lamellipodia and membrane ruffle formation (PubMed:16959763). In neurons, regulates spine maturation through the modulation of ARHGEF7 activity (PubMed:16959763).</text>
</comment>
<comment type="subunit">
    <text evidence="1 2 4 5 6 7 9">Homodimer. Heterodimerizes with YWHAE (By similarity). Homo- and heterodimerization is inhibited by phosphorylation on Ser-58 (By similarity). Interacts with FOXO4, NOXA1, SSH1 and ARHGEF2. Interacts with CDK16 and with WEE1 (C-terminal). Interacts with MLF1 (phosphorylated form); the interaction retains it in the cytoplasm. Interacts with Thr-phosphorylated ITGB2. Interacts with Pseudomonas aeruginosa exoS (unphosphorylated form). Interacts with BAX; the interaction occurs in the cytoplasm. Under stress conditions, MAPK8-mediated phosphorylation releases BAX to mitochondria. Interacts with phosphorylated RAF1; the interaction is inhibited when YWHAZ is phosphorylated on Thr-232. Interacts with TP53; the interaction enhances p53 transcriptional activity. The Ser-58 phosphorylated form inhibits this interaction and p53 transcriptional activity. Interacts with ABL1 (phosphorylated form); the interaction retains ABL1 in the cytoplasm. Interacts with PKA-phosphorylated AANAT; the interaction modulates AANAT enzymatic activity by increasing affinity for arylalkylamines and acetyl-CoA and protecting the enzyme from dephosphorylation and proteasomal degradation. It may also prevent thiol-dependent inactivation. Interacts with AKT1; the interaction phosphorylates YWHAZ and modulates dimerization (By similarity). Interacts with GAB2 and SAMSN1. Binds to TLK2 (By similarity). Interacts with BSPRY. Interacts with BCL2L11. Interacts with the 'Thr-369' phosphorylated form of DAPK2 (By similarity). Interacts with PI4KB, TBC1D22A and TBC1D22B (By similarity). Interacts with ZFP36L1 (via phosphorylated form); this interaction occurs in a p38 MAPK- and AKT-signaling pathways (By similarity). Interacts with SLITRK1 (By similarity). Interacts with AK5, LDB1, MADD, MARK3, PDE1A and SMARCB1 (By similarity). Interacts with YWHAZ (By similarity). Interacts with MEFV (By similarity). Interacts with ADAM22 (via C-terminus) (By similarity).</text>
</comment>
<comment type="subcellular location">
    <subcellularLocation>
        <location evidence="4">Cytoplasm</location>
    </subcellularLocation>
    <subcellularLocation>
        <location evidence="4">Melanosome</location>
    </subcellularLocation>
    <text evidence="4">Located to stage I to stage IV melanosomes.</text>
</comment>
<comment type="tissue specificity">
    <text evidence="7">Highly expressed in brain (at protein level).</text>
</comment>
<comment type="PTM">
    <text evidence="4">The delta, brain-specific form differs from the zeta form in being phosphorylated. Phosphorylation on Ser-184 by MAPK8; promotes dissociation of BAX and translocation of BAX to mitochondria. Phosphorylation on Thr-232; inhibits binding of RAF1. Phosphorylated on Ser-58 by PKA and protein kinase C delta type catalytic subunit in a sphingosine-dependent fashion. Phosphorylation on Ser-58 by PKA; disrupts homodimerization and heterodimerization with YHAE and TP53.</text>
</comment>
<comment type="similarity">
    <text evidence="11">Belongs to the 14-3-3 family.</text>
</comment>
<accession>P63102</accession>
<accession>P35215</accession>
<accession>P70197</accession>
<accession>P97286</accession>
<accession>Q52KK1</accession>
<accession>Q6IRF4</accession>
<dbReference type="EMBL" id="D17615">
    <property type="protein sequence ID" value="BAA04534.1"/>
    <property type="molecule type" value="mRNA"/>
</dbReference>
<dbReference type="EMBL" id="U37252">
    <property type="protein sequence ID" value="AAA80544.1"/>
    <property type="molecule type" value="mRNA"/>
</dbReference>
<dbReference type="EMBL" id="D30740">
    <property type="protein sequence ID" value="BAA06402.1"/>
    <property type="molecule type" value="mRNA"/>
</dbReference>
<dbReference type="EMBL" id="BC070941">
    <property type="protein sequence ID" value="AAH70941.2"/>
    <property type="molecule type" value="mRNA"/>
</dbReference>
<dbReference type="EMBL" id="BC094305">
    <property type="protein sequence ID" value="AAH94305.1"/>
    <property type="molecule type" value="mRNA"/>
</dbReference>
<dbReference type="EMBL" id="L07913">
    <property type="protein sequence ID" value="AAC37660.1"/>
    <property type="molecule type" value="mRNA"/>
</dbReference>
<dbReference type="PIR" id="JC2502">
    <property type="entry name" value="JC2502"/>
</dbReference>
<dbReference type="PIR" id="JC5232">
    <property type="entry name" value="JC5232"/>
</dbReference>
<dbReference type="PIR" id="S59915">
    <property type="entry name" value="S59915"/>
</dbReference>
<dbReference type="RefSeq" id="NP_037143.2">
    <property type="nucleotide sequence ID" value="NM_013011.4"/>
</dbReference>
<dbReference type="RefSeq" id="XP_006241591.1">
    <property type="nucleotide sequence ID" value="XM_006241529.3"/>
</dbReference>
<dbReference type="BMRB" id="P63102"/>
<dbReference type="SMR" id="P63102"/>
<dbReference type="BioGRID" id="247609">
    <property type="interactions" value="12"/>
</dbReference>
<dbReference type="CORUM" id="P63102"/>
<dbReference type="DIP" id="DIP-36916N"/>
<dbReference type="FunCoup" id="P63102">
    <property type="interactions" value="3893"/>
</dbReference>
<dbReference type="IntAct" id="P63102">
    <property type="interactions" value="16"/>
</dbReference>
<dbReference type="MINT" id="P63102"/>
<dbReference type="STRING" id="10116.ENSRNOP00000069366"/>
<dbReference type="GlyGen" id="P63102">
    <property type="glycosylation" value="1 site, 1 O-linked glycan (1 site)"/>
</dbReference>
<dbReference type="iPTMnet" id="P63102"/>
<dbReference type="PhosphoSitePlus" id="P63102"/>
<dbReference type="jPOST" id="P63102"/>
<dbReference type="PaxDb" id="10116-ENSRNOP00000030885"/>
<dbReference type="Ensembl" id="ENSRNOT00000096774.1">
    <property type="protein sequence ID" value="ENSRNOP00000082109.1"/>
    <property type="gene ID" value="ENSRNOG00000008195.7"/>
</dbReference>
<dbReference type="GeneID" id="25578"/>
<dbReference type="KEGG" id="rno:25578"/>
<dbReference type="UCSC" id="RGD:3980">
    <property type="organism name" value="rat"/>
</dbReference>
<dbReference type="AGR" id="RGD:3980"/>
<dbReference type="CTD" id="7534"/>
<dbReference type="RGD" id="3980">
    <property type="gene designation" value="Ywhaz"/>
</dbReference>
<dbReference type="eggNOG" id="KOG0841">
    <property type="taxonomic scope" value="Eukaryota"/>
</dbReference>
<dbReference type="GeneTree" id="ENSGT01090000260040"/>
<dbReference type="HOGENOM" id="CLU_058290_1_0_1"/>
<dbReference type="InParanoid" id="P63102"/>
<dbReference type="OMA" id="YDEMVNE"/>
<dbReference type="OrthoDB" id="36005at9989"/>
<dbReference type="PhylomeDB" id="P63102"/>
<dbReference type="TreeFam" id="TF102003"/>
<dbReference type="Reactome" id="R-RNO-111447">
    <property type="pathway name" value="Activation of BAD and translocation to mitochondria"/>
</dbReference>
<dbReference type="Reactome" id="R-RNO-3769402">
    <property type="pathway name" value="Deactivation of the beta-catenin transactivating complex"/>
</dbReference>
<dbReference type="Reactome" id="R-RNO-392517">
    <property type="pathway name" value="Rap1 signalling"/>
</dbReference>
<dbReference type="Reactome" id="R-RNO-430116">
    <property type="pathway name" value="GP1b-IX-V activation signalling"/>
</dbReference>
<dbReference type="Reactome" id="R-RNO-450604">
    <property type="pathway name" value="KSRP (KHSRP) binds and destabilizes mRNA"/>
</dbReference>
<dbReference type="Reactome" id="R-RNO-512988">
    <property type="pathway name" value="Interleukin-3, Interleukin-5 and GM-CSF signaling"/>
</dbReference>
<dbReference type="Reactome" id="R-RNO-5625740">
    <property type="pathway name" value="RHO GTPases activate PKNs"/>
</dbReference>
<dbReference type="Reactome" id="R-RNO-5628897">
    <property type="pathway name" value="TP53 Regulates Metabolic Genes"/>
</dbReference>
<dbReference type="Reactome" id="R-RNO-75035">
    <property type="pathway name" value="Chk1/Chk2(Cds1) mediated inactivation of Cyclin B:Cdk1 complex"/>
</dbReference>
<dbReference type="Reactome" id="R-RNO-9013700">
    <property type="pathway name" value="NOTCH4 Activation and Transmission of Signal to the Nucleus"/>
</dbReference>
<dbReference type="Reactome" id="R-RNO-9614399">
    <property type="pathway name" value="Regulation of localization of FOXO transcription factors"/>
</dbReference>
<dbReference type="PRO" id="PR:P63102"/>
<dbReference type="Proteomes" id="UP000002494">
    <property type="component" value="Chromosome 7"/>
</dbReference>
<dbReference type="Bgee" id="ENSRNOG00000008195">
    <property type="expression patterns" value="Expressed in frontal cortex and 19 other cell types or tissues"/>
</dbReference>
<dbReference type="ExpressionAtlas" id="P63102">
    <property type="expression patterns" value="baseline and differential"/>
</dbReference>
<dbReference type="GO" id="GO:0031252">
    <property type="term" value="C:cell leading edge"/>
    <property type="evidence" value="ECO:0000314"/>
    <property type="project" value="RGD"/>
</dbReference>
<dbReference type="GO" id="GO:0005737">
    <property type="term" value="C:cytoplasm"/>
    <property type="evidence" value="ECO:0000266"/>
    <property type="project" value="RGD"/>
</dbReference>
<dbReference type="GO" id="GO:0005829">
    <property type="term" value="C:cytosol"/>
    <property type="evidence" value="ECO:0000266"/>
    <property type="project" value="RGD"/>
</dbReference>
<dbReference type="GO" id="GO:0098978">
    <property type="term" value="C:glutamatergic synapse"/>
    <property type="evidence" value="ECO:0000266"/>
    <property type="project" value="RGD"/>
</dbReference>
<dbReference type="GO" id="GO:0098686">
    <property type="term" value="C:hippocampal mossy fiber to CA3 synapse"/>
    <property type="evidence" value="ECO:0000266"/>
    <property type="project" value="RGD"/>
</dbReference>
<dbReference type="GO" id="GO:0042470">
    <property type="term" value="C:melanosome"/>
    <property type="evidence" value="ECO:0007669"/>
    <property type="project" value="UniProtKB-SubCell"/>
</dbReference>
<dbReference type="GO" id="GO:0005634">
    <property type="term" value="C:nucleus"/>
    <property type="evidence" value="ECO:0000266"/>
    <property type="project" value="RGD"/>
</dbReference>
<dbReference type="GO" id="GO:0048471">
    <property type="term" value="C:perinuclear region of cytoplasm"/>
    <property type="evidence" value="ECO:0000314"/>
    <property type="project" value="RGD"/>
</dbReference>
<dbReference type="GO" id="GO:0099572">
    <property type="term" value="C:postsynaptic specialization"/>
    <property type="evidence" value="ECO:0000314"/>
    <property type="project" value="SynGO"/>
</dbReference>
<dbReference type="GO" id="GO:0032991">
    <property type="term" value="C:protein-containing complex"/>
    <property type="evidence" value="ECO:0000314"/>
    <property type="project" value="RGD"/>
</dbReference>
<dbReference type="GO" id="GO:0140297">
    <property type="term" value="F:DNA-binding transcription factor binding"/>
    <property type="evidence" value="ECO:0000266"/>
    <property type="project" value="RGD"/>
</dbReference>
<dbReference type="GO" id="GO:0042802">
    <property type="term" value="F:identical protein binding"/>
    <property type="evidence" value="ECO:0000266"/>
    <property type="project" value="RGD"/>
</dbReference>
<dbReference type="GO" id="GO:0050815">
    <property type="term" value="F:phosphoserine residue binding"/>
    <property type="evidence" value="ECO:0000250"/>
    <property type="project" value="UniProtKB"/>
</dbReference>
<dbReference type="GO" id="GO:0019904">
    <property type="term" value="F:protein domain specific binding"/>
    <property type="evidence" value="ECO:0000250"/>
    <property type="project" value="UniProtKB"/>
</dbReference>
<dbReference type="GO" id="GO:0019901">
    <property type="term" value="F:protein kinase binding"/>
    <property type="evidence" value="ECO:0000266"/>
    <property type="project" value="RGD"/>
</dbReference>
<dbReference type="GO" id="GO:0140311">
    <property type="term" value="F:protein sequestering activity"/>
    <property type="evidence" value="ECO:0000250"/>
    <property type="project" value="UniProtKB"/>
</dbReference>
<dbReference type="GO" id="GO:0044877">
    <property type="term" value="F:protein-containing complex binding"/>
    <property type="evidence" value="ECO:0000353"/>
    <property type="project" value="RGD"/>
</dbReference>
<dbReference type="GO" id="GO:0044325">
    <property type="term" value="F:transmembrane transporter binding"/>
    <property type="evidence" value="ECO:0000266"/>
    <property type="project" value="RGD"/>
</dbReference>
<dbReference type="GO" id="GO:0031625">
    <property type="term" value="F:ubiquitin protein ligase binding"/>
    <property type="evidence" value="ECO:0000266"/>
    <property type="project" value="RGD"/>
</dbReference>
<dbReference type="GO" id="GO:0001525">
    <property type="term" value="P:angiogenesis"/>
    <property type="evidence" value="ECO:0000266"/>
    <property type="project" value="RGD"/>
</dbReference>
<dbReference type="GO" id="GO:0042149">
    <property type="term" value="P:cellular response to glucose starvation"/>
    <property type="evidence" value="ECO:0000266"/>
    <property type="project" value="RGD"/>
</dbReference>
<dbReference type="GO" id="GO:0070371">
    <property type="term" value="P:ERK1 and ERK2 cascade"/>
    <property type="evidence" value="ECO:0000266"/>
    <property type="project" value="RGD"/>
</dbReference>
<dbReference type="GO" id="GO:0051683">
    <property type="term" value="P:establishment of Golgi localization"/>
    <property type="evidence" value="ECO:0000266"/>
    <property type="project" value="RGD"/>
</dbReference>
<dbReference type="GO" id="GO:0090168">
    <property type="term" value="P:Golgi reassembly"/>
    <property type="evidence" value="ECO:0000266"/>
    <property type="project" value="RGD"/>
</dbReference>
<dbReference type="GO" id="GO:0002553">
    <property type="term" value="P:histamine secretion by mast cell"/>
    <property type="evidence" value="ECO:0000315"/>
    <property type="project" value="RGD"/>
</dbReference>
<dbReference type="GO" id="GO:0030324">
    <property type="term" value="P:lung development"/>
    <property type="evidence" value="ECO:0000266"/>
    <property type="project" value="RGD"/>
</dbReference>
<dbReference type="GO" id="GO:0045824">
    <property type="term" value="P:negative regulation of innate immune response"/>
    <property type="evidence" value="ECO:0000266"/>
    <property type="project" value="RGD"/>
</dbReference>
<dbReference type="GO" id="GO:1900181">
    <property type="term" value="P:negative regulation of protein localization to nucleus"/>
    <property type="evidence" value="ECO:0000266"/>
    <property type="project" value="RGD"/>
</dbReference>
<dbReference type="GO" id="GO:1904262">
    <property type="term" value="P:negative regulation of TORC1 signaling"/>
    <property type="evidence" value="ECO:0000266"/>
    <property type="project" value="RGD"/>
</dbReference>
<dbReference type="GO" id="GO:0000122">
    <property type="term" value="P:negative regulation of transcription by RNA polymerase II"/>
    <property type="evidence" value="ECO:0000266"/>
    <property type="project" value="RGD"/>
</dbReference>
<dbReference type="GO" id="GO:0008104">
    <property type="term" value="P:protein localization"/>
    <property type="evidence" value="ECO:0000318"/>
    <property type="project" value="GO_Central"/>
</dbReference>
<dbReference type="GO" id="GO:0006468">
    <property type="term" value="P:protein phosphorylation"/>
    <property type="evidence" value="ECO:0000250"/>
    <property type="project" value="UniProtKB"/>
</dbReference>
<dbReference type="GO" id="GO:0006605">
    <property type="term" value="P:protein targeting"/>
    <property type="evidence" value="ECO:0000266"/>
    <property type="project" value="RGD"/>
</dbReference>
<dbReference type="GO" id="GO:0006626">
    <property type="term" value="P:protein targeting to mitochondrion"/>
    <property type="evidence" value="ECO:0000314"/>
    <property type="project" value="RGD"/>
</dbReference>
<dbReference type="GO" id="GO:0070372">
    <property type="term" value="P:regulation of ERK1 and ERK2 cascade"/>
    <property type="evidence" value="ECO:0000250"/>
    <property type="project" value="UniProtKB"/>
</dbReference>
<dbReference type="GO" id="GO:0043067">
    <property type="term" value="P:regulation of programmed cell death"/>
    <property type="evidence" value="ECO:0000266"/>
    <property type="project" value="RGD"/>
</dbReference>
<dbReference type="GO" id="GO:0031647">
    <property type="term" value="P:regulation of protein stability"/>
    <property type="evidence" value="ECO:0000266"/>
    <property type="project" value="RGD"/>
</dbReference>
<dbReference type="GO" id="GO:0090128">
    <property type="term" value="P:regulation of synapse maturation"/>
    <property type="evidence" value="ECO:0000266"/>
    <property type="project" value="RGD"/>
</dbReference>
<dbReference type="GO" id="GO:0003016">
    <property type="term" value="P:respiratory system process"/>
    <property type="evidence" value="ECO:0000266"/>
    <property type="project" value="RGD"/>
</dbReference>
<dbReference type="GO" id="GO:0009410">
    <property type="term" value="P:response to xenobiotic stimulus"/>
    <property type="evidence" value="ECO:0000314"/>
    <property type="project" value="RGD"/>
</dbReference>
<dbReference type="GO" id="GO:0007165">
    <property type="term" value="P:signal transduction"/>
    <property type="evidence" value="ECO:0000250"/>
    <property type="project" value="UniProtKB"/>
</dbReference>
<dbReference type="GO" id="GO:0008039">
    <property type="term" value="P:synaptic target recognition"/>
    <property type="evidence" value="ECO:0000266"/>
    <property type="project" value="RGD"/>
</dbReference>
<dbReference type="GO" id="GO:0035148">
    <property type="term" value="P:tube formation"/>
    <property type="evidence" value="ECO:0000266"/>
    <property type="project" value="RGD"/>
</dbReference>
<dbReference type="CDD" id="cd10022">
    <property type="entry name" value="14-3-3_beta_zeta"/>
    <property type="match status" value="1"/>
</dbReference>
<dbReference type="FunFam" id="1.20.190.20:FF:000001">
    <property type="entry name" value="14-3-3 gamma 1"/>
    <property type="match status" value="1"/>
</dbReference>
<dbReference type="Gene3D" id="1.20.190.20">
    <property type="entry name" value="14-3-3 domain"/>
    <property type="match status" value="1"/>
</dbReference>
<dbReference type="InterPro" id="IPR000308">
    <property type="entry name" value="14-3-3"/>
</dbReference>
<dbReference type="InterPro" id="IPR023409">
    <property type="entry name" value="14-3-3_CS"/>
</dbReference>
<dbReference type="InterPro" id="IPR036815">
    <property type="entry name" value="14-3-3_dom_sf"/>
</dbReference>
<dbReference type="InterPro" id="IPR023410">
    <property type="entry name" value="14-3-3_domain"/>
</dbReference>
<dbReference type="PANTHER" id="PTHR18860">
    <property type="entry name" value="14-3-3 PROTEIN"/>
    <property type="match status" value="1"/>
</dbReference>
<dbReference type="Pfam" id="PF00244">
    <property type="entry name" value="14-3-3"/>
    <property type="match status" value="1"/>
</dbReference>
<dbReference type="PIRSF" id="PIRSF000868">
    <property type="entry name" value="14-3-3"/>
    <property type="match status" value="1"/>
</dbReference>
<dbReference type="PRINTS" id="PR00305">
    <property type="entry name" value="1433ZETA"/>
</dbReference>
<dbReference type="SMART" id="SM00101">
    <property type="entry name" value="14_3_3"/>
    <property type="match status" value="1"/>
</dbReference>
<dbReference type="SUPFAM" id="SSF48445">
    <property type="entry name" value="14-3-3 protein"/>
    <property type="match status" value="1"/>
</dbReference>
<dbReference type="PROSITE" id="PS00796">
    <property type="entry name" value="1433_1"/>
    <property type="match status" value="1"/>
</dbReference>
<dbReference type="PROSITE" id="PS00797">
    <property type="entry name" value="1433_2"/>
    <property type="match status" value="1"/>
</dbReference>
<proteinExistence type="evidence at protein level"/>